<sequence>MEDSQLYQALKNYPKLQDTLDSIENLEDDTKSEPSECGSPTERGIPSYYLAEELDECEEEDSEEDDDNLPTEIPDPPTVDMLEAIMEDEIDDTAYQVHFEAKQTWKPVIETGGNERGKFTLSVPQNLSALQLLQWETGIHALAERLGGCRLLQISTRGTRDGIEFTVRETPCVSPASDPIPSTSRSSSIASNVSTRQTESPGSKSNTSLGIPEAPANLIDMGAIDKEFILAAISPSDPPYKNTLRNLFGSGDSFEQYNQTGIYSLKELVIAGLKRKGIYNRIRIRCHLEPQFN</sequence>
<proteinExistence type="evidence at protein level"/>
<organismHost>
    <name type="scientific">Homo sapiens</name>
    <name type="common">Human</name>
    <dbReference type="NCBI Taxonomy" id="9606"/>
</organismHost>
<organismHost>
    <name type="scientific">Phlebotominae</name>
    <name type="common">sandflies</name>
    <dbReference type="NCBI Taxonomy" id="7198"/>
</organismHost>
<protein>
    <recommendedName>
        <fullName>Phosphoprotein</fullName>
        <shortName>Protein P</shortName>
    </recommendedName>
    <alternativeName>
        <fullName>Protein M1</fullName>
    </alternativeName>
</protein>
<accession>P16380</accession>
<accession>Q5IX71</accession>
<accession>Q5IX73</accession>
<accession>Q5IX75</accession>
<accession>Q5IX77</accession>
<accession>Q5IX79</accession>
<accession>Q5IX81</accession>
<accession>Q5IX83</accession>
<accession>Q5IX85</accession>
<reference key="1">
    <citation type="journal article" date="1987" name="Virology">
        <title>Sequences of Chandipura virus N and NS genes: evidence for high mutability of the NS gene within vesiculoviruses.</title>
        <authorList>
            <person name="Masters P.S."/>
            <person name="Banerjee A.K."/>
        </authorList>
    </citation>
    <scope>NUCLEOTIDE SEQUENCE [GENOMIC RNA]</scope>
</reference>
<reference key="2">
    <citation type="journal article" date="2005" name="Emerg. Infect. Dis.">
        <title>G, N, and P gene-based analysis of Chandipura viruses, India.</title>
        <authorList>
            <person name="Arankalle V.A."/>
            <person name="Prabhakar S.S."/>
            <person name="Madhukar W.A."/>
            <person name="Hanumaih X."/>
            <person name="Dattatraya P.S."/>
            <person name="Akhilesh Chandra M."/>
        </authorList>
    </citation>
    <scope>NUCLEOTIDE SEQUENCE [GENOMIC RNA]</scope>
    <source>
        <strain>Isolate CIN0309R</strain>
        <strain>Isolate CIN0318R</strain>
        <strain>Isolate CIN0327M</strain>
        <strain>Isolate CIN0327R</strain>
        <strain>Isolate CIN0331M</strain>
        <strain>Isolate CIN0360R</strain>
        <strain>Isolate CIN0360V</strain>
    </source>
</reference>
<reference key="3">
    <citation type="journal article" date="2004" name="Biochemistry">
        <title>P-protein of Chandipura virus is an N-protein-specific chaperone that acts at the nucleation stage.</title>
        <authorList>
            <person name="Majumdar A."/>
            <person name="Bhattacharya R."/>
            <person name="Basak S."/>
            <person name="Shaila M.S."/>
            <person name="Chattopadhyay D."/>
            <person name="Roy S."/>
        </authorList>
    </citation>
    <scope>FUNCTION</scope>
</reference>
<reference key="4">
    <citation type="journal article" date="2012" name="PLoS ONE">
        <title>Interaction of chandipura virus N and P proteins: identification of two mutually exclusive domains of N involved in interaction with P.</title>
        <authorList>
            <person name="Mondal A."/>
            <person name="Roy A."/>
            <person name="Sarkar S."/>
            <person name="Mukherjee J."/>
            <person name="Ganguly T."/>
            <person name="Chattopadhyay D."/>
        </authorList>
    </citation>
    <scope>INTERACTION WITH THE NUCLEOPROTEIN</scope>
</reference>
<reference key="5">
    <citation type="journal article" date="2021" name="Sci. Rep.">
        <title>Analysis of the dark proteome of Chandipura virus reveals maximum propensity for intrinsic disorder in phosphoprotein.</title>
        <authorList>
            <person name="Sharma N.R."/>
            <person name="Gadhave K."/>
            <person name="Kumar P."/>
            <person name="Saif M."/>
            <person name="Khan M.M."/>
            <person name="Sarkar D.P."/>
            <person name="Uversky V.N."/>
            <person name="Giri R."/>
        </authorList>
    </citation>
    <scope>DOMAIN</scope>
</reference>
<keyword id="KW-0143">Chaperone</keyword>
<keyword id="KW-1035">Host cytoplasm</keyword>
<keyword id="KW-0597">Phosphoprotein</keyword>
<keyword id="KW-1185">Reference proteome</keyword>
<keyword id="KW-0693">Viral RNA replication</keyword>
<keyword id="KW-0946">Virion</keyword>
<gene>
    <name type="primary">P</name>
</gene>
<evidence type="ECO:0000250" key="1">
    <source>
        <dbReference type="UniProtKB" id="P03520"/>
    </source>
</evidence>
<evidence type="ECO:0000250" key="2">
    <source>
        <dbReference type="UniProtKB" id="P04877"/>
    </source>
</evidence>
<evidence type="ECO:0000250" key="3">
    <source>
        <dbReference type="UniProtKB" id="P04880"/>
    </source>
</evidence>
<evidence type="ECO:0000256" key="4">
    <source>
        <dbReference type="SAM" id="MobiDB-lite"/>
    </source>
</evidence>
<evidence type="ECO:0000269" key="5">
    <source>
    </source>
</evidence>
<evidence type="ECO:0000269" key="6">
    <source>
    </source>
</evidence>
<evidence type="ECO:0000305" key="7"/>
<evidence type="ECO:0000305" key="8">
    <source>
    </source>
</evidence>
<evidence type="ECO:0000305" key="9">
    <source>
    </source>
</evidence>
<organism>
    <name type="scientific">Chandipura virus (strain I653514)</name>
    <name type="common">CHPV</name>
    <dbReference type="NCBI Taxonomy" id="11273"/>
    <lineage>
        <taxon>Viruses</taxon>
        <taxon>Riboviria</taxon>
        <taxon>Orthornavirae</taxon>
        <taxon>Negarnaviricota</taxon>
        <taxon>Haploviricotina</taxon>
        <taxon>Monjiviricetes</taxon>
        <taxon>Mononegavirales</taxon>
        <taxon>Rhabdoviridae</taxon>
        <taxon>Alpharhabdovirinae</taxon>
        <taxon>Vesiculovirus</taxon>
        <taxon>Vesiculovirus chandipura</taxon>
    </lineage>
</organism>
<feature type="chain" id="PRO_0000222825" description="Phosphoprotein">
    <location>
        <begin position="1"/>
        <end position="293"/>
    </location>
</feature>
<feature type="region of interest" description="Interaction with N(0)" evidence="1">
    <location>
        <begin position="1"/>
        <end position="55"/>
    </location>
</feature>
<feature type="region of interest" description="Disordered" evidence="4">
    <location>
        <begin position="22"/>
        <end position="47"/>
    </location>
</feature>
<feature type="region of interest" description="Interaction with the L polymerase" evidence="1">
    <location>
        <begin position="46"/>
        <end position="103"/>
    </location>
</feature>
<feature type="region of interest" description="Disordered" evidence="4">
    <location>
        <begin position="55"/>
        <end position="74"/>
    </location>
</feature>
<feature type="region of interest" description="Oligomerization" evidence="1">
    <location>
        <begin position="106"/>
        <end position="167"/>
    </location>
</feature>
<feature type="region of interest" description="Hinge" evidence="1">
    <location>
        <begin position="168"/>
        <end position="189"/>
    </location>
</feature>
<feature type="region of interest" description="Disordered" evidence="4">
    <location>
        <begin position="171"/>
        <end position="211"/>
    </location>
</feature>
<feature type="region of interest" description="Interaction with the Nucleoprotein-RNA and template-binding" evidence="2">
    <location>
        <begin position="268"/>
        <end position="293"/>
    </location>
</feature>
<feature type="compositionally biased region" description="Acidic residues" evidence="4">
    <location>
        <begin position="55"/>
        <end position="69"/>
    </location>
</feature>
<feature type="compositionally biased region" description="Low complexity" evidence="4">
    <location>
        <begin position="176"/>
        <end position="196"/>
    </location>
</feature>
<feature type="compositionally biased region" description="Polar residues" evidence="4">
    <location>
        <begin position="197"/>
        <end position="209"/>
    </location>
</feature>
<feature type="site" description="Involved in oligomerization" evidence="3">
    <location>
        <position position="135"/>
    </location>
</feature>
<feature type="site" description="Interaction with the Nucleoprotein-RNA" evidence="2">
    <location>
        <position position="274"/>
    </location>
</feature>
<feature type="modified residue" description="Phosphotyrosine" evidence="1">
    <location>
        <position position="13"/>
    </location>
</feature>
<feature type="modified residue" description="Phosphoserine; by host" evidence="3">
    <location>
        <position position="250"/>
    </location>
</feature>
<feature type="sequence variant" description="In strain: Isolate CIN0309R, Isolate CIN0318R, Isolate CIN0327M, Isolate CIN0327R, Isolate CIN0331M, Isolate CIN0360R and Isolate CIN0360V.">
    <original>E</original>
    <variation>D</variation>
    <location>
        <position position="64"/>
    </location>
</feature>
<feature type="sequence variant" description="In strain: Isolate CIN0309R.">
    <original>Q</original>
    <variation>R</variation>
    <location>
        <position position="103"/>
    </location>
</feature>
<feature type="sequence variant" description="In strain: Isolate CIN0309R, Isolate CIN0327M, Isolate CIN0327R and Isolate CIN0331M.">
    <original>G</original>
    <variation>E</variation>
    <location>
        <position position="112"/>
    </location>
</feature>
<feature type="sequence variant" description="In strain: Isolate CIN0360R and Isolate CIN0360V.">
    <original>I</original>
    <variation>V</variation>
    <location>
        <position position="180"/>
    </location>
</feature>
<feature type="sequence variant" description="In strain: Isolate CIN0309R, Isolate CIN0318R, Isolate CIN0327M, Isolate CIN0331M and Isolate CIN0360V.">
    <original>A</original>
    <variation>V</variation>
    <location>
        <position position="214"/>
    </location>
</feature>
<feature type="sequence variant" description="In strain: Isolate CIN0327M.">
    <original>N</original>
    <variation>T</variation>
    <location>
        <position position="258"/>
    </location>
</feature>
<feature type="sequence variant" description="In strain: Isolate CIN0309R, Isolate CIN0318R and Isolate CIN0331M.">
    <original>I</original>
    <variation>V</variation>
    <location>
        <position position="270"/>
    </location>
</feature>
<comment type="function">
    <text evidence="1 5">Nonenzymatic cofactor regulating the function and conformation of the RNA polymerase and part of the transcription and replication complex (By similarity). Binds the viral ribonucleocapsid and positions the L polymerase on the template (By similarity). Acts as a chaperone for newly synthesized free N protein, so-called N(0) (PubMed:15005621). Plays a role in virion assembly (By similarity).</text>
</comment>
<comment type="subunit">
    <text evidence="1 3 6 8">Homodimer (By similarity). Interacts with the L polymerase; the association of P and L forms the polymerase complex and positions P optimally for encapsidation of newly synthesized genomes with the nucleoprotein (By similarity). Interacts (via N-terminus) with N(0) (PubMed:22485180). Interacts (via C-terminus) with N in ribonucleocapsid (via C-terminus); this interaction allows to package the L polymerase in the virion and positions the polymerase on the template, since P acts as a bridge between N and L (Probable).</text>
</comment>
<comment type="subcellular location">
    <subcellularLocation>
        <location evidence="1">Virion</location>
    </subcellularLocation>
    <subcellularLocation>
        <location evidence="1">Host cytoplasm</location>
    </subcellularLocation>
</comment>
<comment type="domain">
    <text evidence="1 9">The N-terminus is disordered and is involved in binding N(0) (Probable). The region of interaction with the L polymerase is necessary for transcription. The hinge region is highly variable. The central domain is involved in oligomerization. The C-terminus is basic and essential for binding the N-RNA template (By similarity).</text>
</comment>
<comment type="similarity">
    <text evidence="7">Belongs to the vesiculovirus protein P family.</text>
</comment>
<dbReference type="EMBL" id="M16608">
    <property type="protein sequence ID" value="AAA48451.1"/>
    <property type="molecule type" value="Genomic_RNA"/>
</dbReference>
<dbReference type="EMBL" id="AY614724">
    <property type="protein sequence ID" value="AAU81941.1"/>
    <property type="molecule type" value="Genomic_RNA"/>
</dbReference>
<dbReference type="EMBL" id="AY614725">
    <property type="protein sequence ID" value="AAU81943.1"/>
    <property type="molecule type" value="Genomic_RNA"/>
</dbReference>
<dbReference type="EMBL" id="AY614726">
    <property type="protein sequence ID" value="AAU81945.1"/>
    <property type="molecule type" value="Genomic_RNA"/>
</dbReference>
<dbReference type="EMBL" id="AY614727">
    <property type="protein sequence ID" value="AAU81947.1"/>
    <property type="molecule type" value="Genomic_RNA"/>
</dbReference>
<dbReference type="EMBL" id="AY614728">
    <property type="protein sequence ID" value="AAU81949.1"/>
    <property type="molecule type" value="Genomic_RNA"/>
</dbReference>
<dbReference type="EMBL" id="AY614729">
    <property type="protein sequence ID" value="AAU81951.1"/>
    <property type="molecule type" value="Genomic_RNA"/>
</dbReference>
<dbReference type="EMBL" id="AY614730">
    <property type="protein sequence ID" value="AAU81953.1"/>
    <property type="molecule type" value="Genomic_RNA"/>
</dbReference>
<dbReference type="EMBL" id="AY614731">
    <property type="protein sequence ID" value="AAU81955.1"/>
    <property type="molecule type" value="Genomic_RNA"/>
</dbReference>
<dbReference type="PIR" id="B44502">
    <property type="entry name" value="B44502"/>
</dbReference>
<dbReference type="Proteomes" id="UP000008448">
    <property type="component" value="Genome"/>
</dbReference>
<dbReference type="GO" id="GO:0030430">
    <property type="term" value="C:host cell cytoplasm"/>
    <property type="evidence" value="ECO:0007669"/>
    <property type="project" value="UniProtKB-SubCell"/>
</dbReference>
<dbReference type="GO" id="GO:0044423">
    <property type="term" value="C:virion component"/>
    <property type="evidence" value="ECO:0007669"/>
    <property type="project" value="UniProtKB-KW"/>
</dbReference>
<dbReference type="Gene3D" id="1.10.8.440">
    <property type="entry name" value="Vesicular stomatitis virus phosphoprotein C-terminal domain"/>
    <property type="match status" value="1"/>
</dbReference>
<dbReference type="InterPro" id="IPR043036">
    <property type="entry name" value="Phosphoprotein_C_viral"/>
</dbReference>
<name>PHOSP_CHAV</name>